<accession>C4ZZ08</accession>
<gene>
    <name evidence="1" type="primary">glmU</name>
    <name type="ordered locus">BWG_3421</name>
</gene>
<evidence type="ECO:0000255" key="1">
    <source>
        <dbReference type="HAMAP-Rule" id="MF_01631"/>
    </source>
</evidence>
<sequence>MLNNAMSVVILAAGKGTRMYSDLPKVLHTLAGKAMVQHVIDAANELGAAHVHLVYGHGGDLLKQALKDDNLNWVLQAEQLGTGHAMQQAAPFFADDEDILMLYGDVPLISVETLQRLRDAKPQGGIGLLTVKLDDPTGYGRITRENGKVTGIVEHKDATDEQRQIQEINTGILIANGADMKRWLAKLTNNNAQGEYYITDIIALAYQEGREIVAVHPQRLSEVEGVNNRLQLSRLERVYQSEQAEKLLLAGVMLRDPARFDLRGTLTHGRDVEIDTNVIIEGNVTLGHRVKIGTGCVIKNSVIGDDCEISPYTVVEDANLAAACTIGPFARLRPGAELLEGAHVGNFVEMKKARLGKGSKAGHLTYLGDAEIGDNVNIGAGTITCNYDGANKFKTIIGDDVFVGSDTQLVAPVTVGKGATIAAGTTVTRNVGENALAISRVPQTQKEGWRRPVKKK</sequence>
<dbReference type="EC" id="2.7.7.23" evidence="1"/>
<dbReference type="EC" id="2.3.1.157" evidence="1"/>
<dbReference type="EMBL" id="CP001396">
    <property type="protein sequence ID" value="ACR63212.1"/>
    <property type="molecule type" value="Genomic_DNA"/>
</dbReference>
<dbReference type="RefSeq" id="WP_000933736.1">
    <property type="nucleotide sequence ID" value="NC_012759.1"/>
</dbReference>
<dbReference type="SMR" id="C4ZZ08"/>
<dbReference type="GeneID" id="75205448"/>
<dbReference type="KEGG" id="ebw:BWG_3421"/>
<dbReference type="HOGENOM" id="CLU_029499_15_2_6"/>
<dbReference type="UniPathway" id="UPA00113">
    <property type="reaction ID" value="UER00532"/>
</dbReference>
<dbReference type="UniPathway" id="UPA00113">
    <property type="reaction ID" value="UER00533"/>
</dbReference>
<dbReference type="UniPathway" id="UPA00973"/>
<dbReference type="GO" id="GO:0005737">
    <property type="term" value="C:cytoplasm"/>
    <property type="evidence" value="ECO:0007669"/>
    <property type="project" value="UniProtKB-SubCell"/>
</dbReference>
<dbReference type="GO" id="GO:0016020">
    <property type="term" value="C:membrane"/>
    <property type="evidence" value="ECO:0007669"/>
    <property type="project" value="GOC"/>
</dbReference>
<dbReference type="GO" id="GO:0019134">
    <property type="term" value="F:glucosamine-1-phosphate N-acetyltransferase activity"/>
    <property type="evidence" value="ECO:0007669"/>
    <property type="project" value="UniProtKB-UniRule"/>
</dbReference>
<dbReference type="GO" id="GO:0000287">
    <property type="term" value="F:magnesium ion binding"/>
    <property type="evidence" value="ECO:0007669"/>
    <property type="project" value="UniProtKB-UniRule"/>
</dbReference>
<dbReference type="GO" id="GO:0003977">
    <property type="term" value="F:UDP-N-acetylglucosamine diphosphorylase activity"/>
    <property type="evidence" value="ECO:0007669"/>
    <property type="project" value="UniProtKB-UniRule"/>
</dbReference>
<dbReference type="GO" id="GO:0000902">
    <property type="term" value="P:cell morphogenesis"/>
    <property type="evidence" value="ECO:0007669"/>
    <property type="project" value="UniProtKB-UniRule"/>
</dbReference>
<dbReference type="GO" id="GO:0071555">
    <property type="term" value="P:cell wall organization"/>
    <property type="evidence" value="ECO:0007669"/>
    <property type="project" value="UniProtKB-KW"/>
</dbReference>
<dbReference type="GO" id="GO:0009245">
    <property type="term" value="P:lipid A biosynthetic process"/>
    <property type="evidence" value="ECO:0007669"/>
    <property type="project" value="UniProtKB-UniRule"/>
</dbReference>
<dbReference type="GO" id="GO:0009252">
    <property type="term" value="P:peptidoglycan biosynthetic process"/>
    <property type="evidence" value="ECO:0007669"/>
    <property type="project" value="UniProtKB-UniRule"/>
</dbReference>
<dbReference type="GO" id="GO:0008360">
    <property type="term" value="P:regulation of cell shape"/>
    <property type="evidence" value="ECO:0007669"/>
    <property type="project" value="UniProtKB-KW"/>
</dbReference>
<dbReference type="GO" id="GO:0006048">
    <property type="term" value="P:UDP-N-acetylglucosamine biosynthetic process"/>
    <property type="evidence" value="ECO:0007669"/>
    <property type="project" value="UniProtKB-UniPathway"/>
</dbReference>
<dbReference type="CDD" id="cd02540">
    <property type="entry name" value="GT2_GlmU_N_bac"/>
    <property type="match status" value="1"/>
</dbReference>
<dbReference type="CDD" id="cd03353">
    <property type="entry name" value="LbH_GlmU_C"/>
    <property type="match status" value="1"/>
</dbReference>
<dbReference type="FunFam" id="2.160.10.10:FF:000011">
    <property type="entry name" value="Bifunctional protein GlmU"/>
    <property type="match status" value="1"/>
</dbReference>
<dbReference type="FunFam" id="3.90.550.10:FF:000006">
    <property type="entry name" value="Bifunctional protein GlmU"/>
    <property type="match status" value="1"/>
</dbReference>
<dbReference type="Gene3D" id="2.160.10.10">
    <property type="entry name" value="Hexapeptide repeat proteins"/>
    <property type="match status" value="1"/>
</dbReference>
<dbReference type="Gene3D" id="3.90.550.10">
    <property type="entry name" value="Spore Coat Polysaccharide Biosynthesis Protein SpsA, Chain A"/>
    <property type="match status" value="1"/>
</dbReference>
<dbReference type="HAMAP" id="MF_01631">
    <property type="entry name" value="GlmU"/>
    <property type="match status" value="1"/>
</dbReference>
<dbReference type="InterPro" id="IPR005882">
    <property type="entry name" value="Bifunctional_GlmU"/>
</dbReference>
<dbReference type="InterPro" id="IPR050065">
    <property type="entry name" value="GlmU-like"/>
</dbReference>
<dbReference type="InterPro" id="IPR038009">
    <property type="entry name" value="GlmU_C_LbH"/>
</dbReference>
<dbReference type="InterPro" id="IPR001451">
    <property type="entry name" value="Hexapep"/>
</dbReference>
<dbReference type="InterPro" id="IPR018357">
    <property type="entry name" value="Hexapep_transf_CS"/>
</dbReference>
<dbReference type="InterPro" id="IPR025877">
    <property type="entry name" value="MobA-like_NTP_Trfase"/>
</dbReference>
<dbReference type="InterPro" id="IPR029044">
    <property type="entry name" value="Nucleotide-diphossugar_trans"/>
</dbReference>
<dbReference type="InterPro" id="IPR011004">
    <property type="entry name" value="Trimer_LpxA-like_sf"/>
</dbReference>
<dbReference type="NCBIfam" id="TIGR01173">
    <property type="entry name" value="glmU"/>
    <property type="match status" value="1"/>
</dbReference>
<dbReference type="NCBIfam" id="NF006986">
    <property type="entry name" value="PRK09451.1"/>
    <property type="match status" value="1"/>
</dbReference>
<dbReference type="PANTHER" id="PTHR43584:SF3">
    <property type="entry name" value="BIFUNCTIONAL PROTEIN GLMU"/>
    <property type="match status" value="1"/>
</dbReference>
<dbReference type="PANTHER" id="PTHR43584">
    <property type="entry name" value="NUCLEOTIDYL TRANSFERASE"/>
    <property type="match status" value="1"/>
</dbReference>
<dbReference type="Pfam" id="PF00132">
    <property type="entry name" value="Hexapep"/>
    <property type="match status" value="1"/>
</dbReference>
<dbReference type="Pfam" id="PF12804">
    <property type="entry name" value="NTP_transf_3"/>
    <property type="match status" value="1"/>
</dbReference>
<dbReference type="SUPFAM" id="SSF53448">
    <property type="entry name" value="Nucleotide-diphospho-sugar transferases"/>
    <property type="match status" value="1"/>
</dbReference>
<dbReference type="SUPFAM" id="SSF51161">
    <property type="entry name" value="Trimeric LpxA-like enzymes"/>
    <property type="match status" value="1"/>
</dbReference>
<dbReference type="PROSITE" id="PS00101">
    <property type="entry name" value="HEXAPEP_TRANSFERASES"/>
    <property type="match status" value="1"/>
</dbReference>
<keyword id="KW-0012">Acyltransferase</keyword>
<keyword id="KW-0133">Cell shape</keyword>
<keyword id="KW-0961">Cell wall biogenesis/degradation</keyword>
<keyword id="KW-0963">Cytoplasm</keyword>
<keyword id="KW-0460">Magnesium</keyword>
<keyword id="KW-0479">Metal-binding</keyword>
<keyword id="KW-0511">Multifunctional enzyme</keyword>
<keyword id="KW-0548">Nucleotidyltransferase</keyword>
<keyword id="KW-0573">Peptidoglycan synthesis</keyword>
<keyword id="KW-0677">Repeat</keyword>
<keyword id="KW-0808">Transferase</keyword>
<reference key="1">
    <citation type="journal article" date="2009" name="J. Bacteriol.">
        <title>Genomic sequencing reveals regulatory mutations and recombinational events in the widely used MC4100 lineage of Escherichia coli K-12.</title>
        <authorList>
            <person name="Ferenci T."/>
            <person name="Zhou Z."/>
            <person name="Betteridge T."/>
            <person name="Ren Y."/>
            <person name="Liu Y."/>
            <person name="Feng L."/>
            <person name="Reeves P.R."/>
            <person name="Wang L."/>
        </authorList>
    </citation>
    <scope>NUCLEOTIDE SEQUENCE [LARGE SCALE GENOMIC DNA]</scope>
    <source>
        <strain>K12 / MC4100 / BW2952</strain>
    </source>
</reference>
<proteinExistence type="inferred from homology"/>
<protein>
    <recommendedName>
        <fullName evidence="1">Bifunctional protein GlmU</fullName>
    </recommendedName>
    <domain>
        <recommendedName>
            <fullName evidence="1">UDP-N-acetylglucosamine pyrophosphorylase</fullName>
            <ecNumber evidence="1">2.7.7.23</ecNumber>
        </recommendedName>
        <alternativeName>
            <fullName evidence="1">N-acetylglucosamine-1-phosphate uridyltransferase</fullName>
        </alternativeName>
    </domain>
    <domain>
        <recommendedName>
            <fullName evidence="1">Glucosamine-1-phosphate N-acetyltransferase</fullName>
            <ecNumber evidence="1">2.3.1.157</ecNumber>
        </recommendedName>
    </domain>
</protein>
<organism>
    <name type="scientific">Escherichia coli (strain K12 / MC4100 / BW2952)</name>
    <dbReference type="NCBI Taxonomy" id="595496"/>
    <lineage>
        <taxon>Bacteria</taxon>
        <taxon>Pseudomonadati</taxon>
        <taxon>Pseudomonadota</taxon>
        <taxon>Gammaproteobacteria</taxon>
        <taxon>Enterobacterales</taxon>
        <taxon>Enterobacteriaceae</taxon>
        <taxon>Escherichia</taxon>
    </lineage>
</organism>
<comment type="function">
    <text evidence="1">Catalyzes the last two sequential reactions in the de novo biosynthetic pathway for UDP-N-acetylglucosamine (UDP-GlcNAc). The C-terminal domain catalyzes the transfer of acetyl group from acetyl coenzyme A to glucosamine-1-phosphate (GlcN-1-P) to produce N-acetylglucosamine-1-phosphate (GlcNAc-1-P), which is converted into UDP-GlcNAc by the transfer of uridine 5-monophosphate (from uridine 5-triphosphate), a reaction catalyzed by the N-terminal domain.</text>
</comment>
<comment type="catalytic activity">
    <reaction evidence="1">
        <text>alpha-D-glucosamine 1-phosphate + acetyl-CoA = N-acetyl-alpha-D-glucosamine 1-phosphate + CoA + H(+)</text>
        <dbReference type="Rhea" id="RHEA:13725"/>
        <dbReference type="ChEBI" id="CHEBI:15378"/>
        <dbReference type="ChEBI" id="CHEBI:57287"/>
        <dbReference type="ChEBI" id="CHEBI:57288"/>
        <dbReference type="ChEBI" id="CHEBI:57776"/>
        <dbReference type="ChEBI" id="CHEBI:58516"/>
        <dbReference type="EC" id="2.3.1.157"/>
    </reaction>
</comment>
<comment type="catalytic activity">
    <reaction evidence="1">
        <text>N-acetyl-alpha-D-glucosamine 1-phosphate + UTP + H(+) = UDP-N-acetyl-alpha-D-glucosamine + diphosphate</text>
        <dbReference type="Rhea" id="RHEA:13509"/>
        <dbReference type="ChEBI" id="CHEBI:15378"/>
        <dbReference type="ChEBI" id="CHEBI:33019"/>
        <dbReference type="ChEBI" id="CHEBI:46398"/>
        <dbReference type="ChEBI" id="CHEBI:57705"/>
        <dbReference type="ChEBI" id="CHEBI:57776"/>
        <dbReference type="EC" id="2.7.7.23"/>
    </reaction>
</comment>
<comment type="cofactor">
    <cofactor evidence="1">
        <name>Mg(2+)</name>
        <dbReference type="ChEBI" id="CHEBI:18420"/>
    </cofactor>
    <text evidence="1">Binds 1 Mg(2+) ion per subunit.</text>
</comment>
<comment type="pathway">
    <text evidence="1">Nucleotide-sugar biosynthesis; UDP-N-acetyl-alpha-D-glucosamine biosynthesis; N-acetyl-alpha-D-glucosamine 1-phosphate from alpha-D-glucosamine 6-phosphate (route II): step 2/2.</text>
</comment>
<comment type="pathway">
    <text evidence="1">Nucleotide-sugar biosynthesis; UDP-N-acetyl-alpha-D-glucosamine biosynthesis; UDP-N-acetyl-alpha-D-glucosamine from N-acetyl-alpha-D-glucosamine 1-phosphate: step 1/1.</text>
</comment>
<comment type="pathway">
    <text evidence="1">Bacterial outer membrane biogenesis; LPS lipid A biosynthesis.</text>
</comment>
<comment type="subunit">
    <text evidence="1">Homotrimer.</text>
</comment>
<comment type="subcellular location">
    <subcellularLocation>
        <location evidence="1">Cytoplasm</location>
    </subcellularLocation>
</comment>
<comment type="similarity">
    <text evidence="1">In the N-terminal section; belongs to the N-acetylglucosamine-1-phosphate uridyltransferase family.</text>
</comment>
<comment type="similarity">
    <text evidence="1">In the C-terminal section; belongs to the transferase hexapeptide repeat family.</text>
</comment>
<name>GLMU_ECOBW</name>
<feature type="chain" id="PRO_1000215771" description="Bifunctional protein GlmU">
    <location>
        <begin position="1"/>
        <end position="456"/>
    </location>
</feature>
<feature type="region of interest" description="Pyrophosphorylase" evidence="1">
    <location>
        <begin position="1"/>
        <end position="229"/>
    </location>
</feature>
<feature type="region of interest" description="Linker" evidence="1">
    <location>
        <begin position="230"/>
        <end position="250"/>
    </location>
</feature>
<feature type="region of interest" description="N-acetyltransferase" evidence="1">
    <location>
        <begin position="251"/>
        <end position="456"/>
    </location>
</feature>
<feature type="active site" description="Proton acceptor" evidence="1">
    <location>
        <position position="363"/>
    </location>
</feature>
<feature type="binding site" evidence="1">
    <location>
        <begin position="11"/>
        <end position="14"/>
    </location>
    <ligand>
        <name>UDP-N-acetyl-alpha-D-glucosamine</name>
        <dbReference type="ChEBI" id="CHEBI:57705"/>
    </ligand>
</feature>
<feature type="binding site" evidence="1">
    <location>
        <position position="25"/>
    </location>
    <ligand>
        <name>UDP-N-acetyl-alpha-D-glucosamine</name>
        <dbReference type="ChEBI" id="CHEBI:57705"/>
    </ligand>
</feature>
<feature type="binding site" evidence="1">
    <location>
        <position position="76"/>
    </location>
    <ligand>
        <name>UDP-N-acetyl-alpha-D-glucosamine</name>
        <dbReference type="ChEBI" id="CHEBI:57705"/>
    </ligand>
</feature>
<feature type="binding site" evidence="1">
    <location>
        <begin position="81"/>
        <end position="82"/>
    </location>
    <ligand>
        <name>UDP-N-acetyl-alpha-D-glucosamine</name>
        <dbReference type="ChEBI" id="CHEBI:57705"/>
    </ligand>
</feature>
<feature type="binding site" evidence="1">
    <location>
        <begin position="103"/>
        <end position="105"/>
    </location>
    <ligand>
        <name>UDP-N-acetyl-alpha-D-glucosamine</name>
        <dbReference type="ChEBI" id="CHEBI:57705"/>
    </ligand>
</feature>
<feature type="binding site" evidence="1">
    <location>
        <position position="105"/>
    </location>
    <ligand>
        <name>Mg(2+)</name>
        <dbReference type="ChEBI" id="CHEBI:18420"/>
    </ligand>
</feature>
<feature type="binding site" evidence="1">
    <location>
        <position position="140"/>
    </location>
    <ligand>
        <name>UDP-N-acetyl-alpha-D-glucosamine</name>
        <dbReference type="ChEBI" id="CHEBI:57705"/>
    </ligand>
</feature>
<feature type="binding site" evidence="1">
    <location>
        <position position="154"/>
    </location>
    <ligand>
        <name>UDP-N-acetyl-alpha-D-glucosamine</name>
        <dbReference type="ChEBI" id="CHEBI:57705"/>
    </ligand>
</feature>
<feature type="binding site" evidence="1">
    <location>
        <position position="169"/>
    </location>
    <ligand>
        <name>UDP-N-acetyl-alpha-D-glucosamine</name>
        <dbReference type="ChEBI" id="CHEBI:57705"/>
    </ligand>
</feature>
<feature type="binding site" evidence="1">
    <location>
        <position position="227"/>
    </location>
    <ligand>
        <name>Mg(2+)</name>
        <dbReference type="ChEBI" id="CHEBI:18420"/>
    </ligand>
</feature>
<feature type="binding site" evidence="1">
    <location>
        <position position="227"/>
    </location>
    <ligand>
        <name>UDP-N-acetyl-alpha-D-glucosamine</name>
        <dbReference type="ChEBI" id="CHEBI:57705"/>
    </ligand>
</feature>
<feature type="binding site" evidence="1">
    <location>
        <position position="333"/>
    </location>
    <ligand>
        <name>UDP-N-acetyl-alpha-D-glucosamine</name>
        <dbReference type="ChEBI" id="CHEBI:57705"/>
    </ligand>
</feature>
<feature type="binding site" evidence="1">
    <location>
        <position position="351"/>
    </location>
    <ligand>
        <name>UDP-N-acetyl-alpha-D-glucosamine</name>
        <dbReference type="ChEBI" id="CHEBI:57705"/>
    </ligand>
</feature>
<feature type="binding site" evidence="1">
    <location>
        <position position="366"/>
    </location>
    <ligand>
        <name>UDP-N-acetyl-alpha-D-glucosamine</name>
        <dbReference type="ChEBI" id="CHEBI:57705"/>
    </ligand>
</feature>
<feature type="binding site" evidence="1">
    <location>
        <position position="377"/>
    </location>
    <ligand>
        <name>UDP-N-acetyl-alpha-D-glucosamine</name>
        <dbReference type="ChEBI" id="CHEBI:57705"/>
    </ligand>
</feature>
<feature type="binding site" evidence="1">
    <location>
        <position position="380"/>
    </location>
    <ligand>
        <name>acetyl-CoA</name>
        <dbReference type="ChEBI" id="CHEBI:57288"/>
    </ligand>
</feature>
<feature type="binding site" evidence="1">
    <location>
        <begin position="386"/>
        <end position="387"/>
    </location>
    <ligand>
        <name>acetyl-CoA</name>
        <dbReference type="ChEBI" id="CHEBI:57288"/>
    </ligand>
</feature>
<feature type="binding site" evidence="1">
    <location>
        <position position="405"/>
    </location>
    <ligand>
        <name>acetyl-CoA</name>
        <dbReference type="ChEBI" id="CHEBI:57288"/>
    </ligand>
</feature>
<feature type="binding site" evidence="1">
    <location>
        <position position="423"/>
    </location>
    <ligand>
        <name>acetyl-CoA</name>
        <dbReference type="ChEBI" id="CHEBI:57288"/>
    </ligand>
</feature>
<feature type="binding site" evidence="1">
    <location>
        <position position="440"/>
    </location>
    <ligand>
        <name>acetyl-CoA</name>
        <dbReference type="ChEBI" id="CHEBI:57288"/>
    </ligand>
</feature>